<keyword id="KW-0004">4Fe-4S</keyword>
<keyword id="KW-0342">GTP-binding</keyword>
<keyword id="KW-0408">Iron</keyword>
<keyword id="KW-0411">Iron-sulfur</keyword>
<keyword id="KW-0456">Lyase</keyword>
<keyword id="KW-0479">Metal-binding</keyword>
<keyword id="KW-0501">Molybdenum cofactor biosynthesis</keyword>
<keyword id="KW-0547">Nucleotide-binding</keyword>
<keyword id="KW-0949">S-adenosyl-L-methionine</keyword>
<name>MOAA_HAEI8</name>
<evidence type="ECO:0000255" key="1">
    <source>
        <dbReference type="HAMAP-Rule" id="MF_01225"/>
    </source>
</evidence>
<evidence type="ECO:0000255" key="2">
    <source>
        <dbReference type="PROSITE-ProRule" id="PRU01266"/>
    </source>
</evidence>
<reference key="1">
    <citation type="journal article" date="2005" name="J. Bacteriol.">
        <title>Genomic sequence of an otitis media isolate of nontypeable Haemophilus influenzae: comparative study with H. influenzae serotype d, strain KW20.</title>
        <authorList>
            <person name="Harrison A."/>
            <person name="Dyer D.W."/>
            <person name="Gillaspy A."/>
            <person name="Ray W.C."/>
            <person name="Mungur R."/>
            <person name="Carson M.B."/>
            <person name="Zhong H."/>
            <person name="Gipson J."/>
            <person name="Gipson M."/>
            <person name="Johnson L.S."/>
            <person name="Lewis L."/>
            <person name="Bakaletz L.O."/>
            <person name="Munson R.S. Jr."/>
        </authorList>
    </citation>
    <scope>NUCLEOTIDE SEQUENCE [LARGE SCALE GENOMIC DNA]</scope>
    <source>
        <strain>86-028NP</strain>
    </source>
</reference>
<comment type="function">
    <text evidence="1">Catalyzes the cyclization of GTP to (8S)-3',8-cyclo-7,8-dihydroguanosine 5'-triphosphate.</text>
</comment>
<comment type="catalytic activity">
    <reaction evidence="1">
        <text>GTP + AH2 + S-adenosyl-L-methionine = (8S)-3',8-cyclo-7,8-dihydroguanosine 5'-triphosphate + 5'-deoxyadenosine + L-methionine + A + H(+)</text>
        <dbReference type="Rhea" id="RHEA:49576"/>
        <dbReference type="ChEBI" id="CHEBI:13193"/>
        <dbReference type="ChEBI" id="CHEBI:15378"/>
        <dbReference type="ChEBI" id="CHEBI:17319"/>
        <dbReference type="ChEBI" id="CHEBI:17499"/>
        <dbReference type="ChEBI" id="CHEBI:37565"/>
        <dbReference type="ChEBI" id="CHEBI:57844"/>
        <dbReference type="ChEBI" id="CHEBI:59789"/>
        <dbReference type="ChEBI" id="CHEBI:131766"/>
        <dbReference type="EC" id="4.1.99.22"/>
    </reaction>
</comment>
<comment type="cofactor">
    <cofactor evidence="1">
        <name>[4Fe-4S] cluster</name>
        <dbReference type="ChEBI" id="CHEBI:49883"/>
    </cofactor>
    <text evidence="1">Binds 2 [4Fe-4S] clusters. Binds 1 [4Fe-4S] cluster coordinated with 3 cysteines and an exchangeable S-adenosyl-L-methionine and 1 [4Fe-4S] cluster coordinated with 3 cysteines and the GTP-derived substrate.</text>
</comment>
<comment type="pathway">
    <text evidence="1">Cofactor biosynthesis; molybdopterin biosynthesis.</text>
</comment>
<comment type="subunit">
    <text evidence="1">Monomer and homodimer.</text>
</comment>
<comment type="similarity">
    <text evidence="1">Belongs to the radical SAM superfamily. MoaA family.</text>
</comment>
<organism>
    <name type="scientific">Haemophilus influenzae (strain 86-028NP)</name>
    <dbReference type="NCBI Taxonomy" id="281310"/>
    <lineage>
        <taxon>Bacteria</taxon>
        <taxon>Pseudomonadati</taxon>
        <taxon>Pseudomonadota</taxon>
        <taxon>Gammaproteobacteria</taxon>
        <taxon>Pasteurellales</taxon>
        <taxon>Pasteurellaceae</taxon>
        <taxon>Haemophilus</taxon>
    </lineage>
</organism>
<protein>
    <recommendedName>
        <fullName evidence="1">GTP 3',8-cyclase</fullName>
        <ecNumber evidence="1">4.1.99.22</ecNumber>
    </recommendedName>
    <alternativeName>
        <fullName evidence="1">Molybdenum cofactor biosynthesis protein A</fullName>
    </alternativeName>
</protein>
<gene>
    <name evidence="1" type="primary">moaA</name>
    <name type="ordered locus">NTHI1978</name>
</gene>
<dbReference type="EC" id="4.1.99.22" evidence="1"/>
<dbReference type="EMBL" id="CP000057">
    <property type="protein sequence ID" value="AAX88728.1"/>
    <property type="molecule type" value="Genomic_DNA"/>
</dbReference>
<dbReference type="RefSeq" id="WP_011272737.1">
    <property type="nucleotide sequence ID" value="NC_007146.2"/>
</dbReference>
<dbReference type="SMR" id="Q4QJR9"/>
<dbReference type="KEGG" id="hit:NTHI1978"/>
<dbReference type="HOGENOM" id="CLU_009273_0_1_6"/>
<dbReference type="UniPathway" id="UPA00344"/>
<dbReference type="Proteomes" id="UP000002525">
    <property type="component" value="Chromosome"/>
</dbReference>
<dbReference type="GO" id="GO:0051539">
    <property type="term" value="F:4 iron, 4 sulfur cluster binding"/>
    <property type="evidence" value="ECO:0007669"/>
    <property type="project" value="UniProtKB-UniRule"/>
</dbReference>
<dbReference type="GO" id="GO:0061799">
    <property type="term" value="F:cyclic pyranopterin monophosphate synthase activity"/>
    <property type="evidence" value="ECO:0007669"/>
    <property type="project" value="TreeGrafter"/>
</dbReference>
<dbReference type="GO" id="GO:0061798">
    <property type="term" value="F:GTP 3',8'-cyclase activity"/>
    <property type="evidence" value="ECO:0007669"/>
    <property type="project" value="UniProtKB-UniRule"/>
</dbReference>
<dbReference type="GO" id="GO:0005525">
    <property type="term" value="F:GTP binding"/>
    <property type="evidence" value="ECO:0007669"/>
    <property type="project" value="UniProtKB-UniRule"/>
</dbReference>
<dbReference type="GO" id="GO:0046872">
    <property type="term" value="F:metal ion binding"/>
    <property type="evidence" value="ECO:0007669"/>
    <property type="project" value="UniProtKB-KW"/>
</dbReference>
<dbReference type="GO" id="GO:1904047">
    <property type="term" value="F:S-adenosyl-L-methionine binding"/>
    <property type="evidence" value="ECO:0007669"/>
    <property type="project" value="UniProtKB-UniRule"/>
</dbReference>
<dbReference type="GO" id="GO:0006777">
    <property type="term" value="P:Mo-molybdopterin cofactor biosynthetic process"/>
    <property type="evidence" value="ECO:0007669"/>
    <property type="project" value="UniProtKB-UniRule"/>
</dbReference>
<dbReference type="CDD" id="cd01335">
    <property type="entry name" value="Radical_SAM"/>
    <property type="match status" value="1"/>
</dbReference>
<dbReference type="CDD" id="cd21117">
    <property type="entry name" value="Twitch_MoaA"/>
    <property type="match status" value="1"/>
</dbReference>
<dbReference type="FunFam" id="3.20.20.70:FF:000057">
    <property type="entry name" value="GTP 3',8-cyclase"/>
    <property type="match status" value="1"/>
</dbReference>
<dbReference type="Gene3D" id="3.20.20.70">
    <property type="entry name" value="Aldolase class I"/>
    <property type="match status" value="1"/>
</dbReference>
<dbReference type="HAMAP" id="MF_01225_B">
    <property type="entry name" value="MoaA_B"/>
    <property type="match status" value="1"/>
</dbReference>
<dbReference type="InterPro" id="IPR013785">
    <property type="entry name" value="Aldolase_TIM"/>
</dbReference>
<dbReference type="InterPro" id="IPR006638">
    <property type="entry name" value="Elp3/MiaA/NifB-like_rSAM"/>
</dbReference>
<dbReference type="InterPro" id="IPR013483">
    <property type="entry name" value="MoaA"/>
</dbReference>
<dbReference type="InterPro" id="IPR000385">
    <property type="entry name" value="MoaA_NifB_PqqE_Fe-S-bd_CS"/>
</dbReference>
<dbReference type="InterPro" id="IPR010505">
    <property type="entry name" value="MoaA_twitch"/>
</dbReference>
<dbReference type="InterPro" id="IPR050105">
    <property type="entry name" value="MoCo_biosynth_MoaA/MoaC"/>
</dbReference>
<dbReference type="InterPro" id="IPR007197">
    <property type="entry name" value="rSAM"/>
</dbReference>
<dbReference type="NCBIfam" id="TIGR02666">
    <property type="entry name" value="moaA"/>
    <property type="match status" value="1"/>
</dbReference>
<dbReference type="PANTHER" id="PTHR22960:SF28">
    <property type="entry name" value="GTP 3',8-CYCLASE"/>
    <property type="match status" value="1"/>
</dbReference>
<dbReference type="PANTHER" id="PTHR22960">
    <property type="entry name" value="MOLYBDOPTERIN COFACTOR SYNTHESIS PROTEIN A"/>
    <property type="match status" value="1"/>
</dbReference>
<dbReference type="Pfam" id="PF13353">
    <property type="entry name" value="Fer4_12"/>
    <property type="match status" value="1"/>
</dbReference>
<dbReference type="Pfam" id="PF06463">
    <property type="entry name" value="Mob_synth_C"/>
    <property type="match status" value="1"/>
</dbReference>
<dbReference type="Pfam" id="PF04055">
    <property type="entry name" value="Radical_SAM"/>
    <property type="match status" value="1"/>
</dbReference>
<dbReference type="SFLD" id="SFLDG01383">
    <property type="entry name" value="cyclic_pyranopterin_phosphate"/>
    <property type="match status" value="1"/>
</dbReference>
<dbReference type="SFLD" id="SFLDG01072">
    <property type="entry name" value="dehydrogenase_like"/>
    <property type="match status" value="1"/>
</dbReference>
<dbReference type="SMART" id="SM00729">
    <property type="entry name" value="Elp3"/>
    <property type="match status" value="1"/>
</dbReference>
<dbReference type="SUPFAM" id="SSF102114">
    <property type="entry name" value="Radical SAM enzymes"/>
    <property type="match status" value="1"/>
</dbReference>
<dbReference type="PROSITE" id="PS01305">
    <property type="entry name" value="MOAA_NIFB_PQQE"/>
    <property type="match status" value="1"/>
</dbReference>
<dbReference type="PROSITE" id="PS51918">
    <property type="entry name" value="RADICAL_SAM"/>
    <property type="match status" value="1"/>
</dbReference>
<feature type="chain" id="PRO_1000054192" description="GTP 3',8-cyclase">
    <location>
        <begin position="1"/>
        <end position="337"/>
    </location>
</feature>
<feature type="domain" description="Radical SAM core" evidence="2">
    <location>
        <begin position="17"/>
        <end position="243"/>
    </location>
</feature>
<feature type="binding site" evidence="1">
    <location>
        <position position="26"/>
    </location>
    <ligand>
        <name>GTP</name>
        <dbReference type="ChEBI" id="CHEBI:37565"/>
    </ligand>
</feature>
<feature type="binding site" evidence="1">
    <location>
        <position position="33"/>
    </location>
    <ligand>
        <name>[4Fe-4S] cluster</name>
        <dbReference type="ChEBI" id="CHEBI:49883"/>
        <label>1</label>
        <note>4Fe-4S-S-AdoMet</note>
    </ligand>
</feature>
<feature type="binding site" evidence="1">
    <location>
        <position position="37"/>
    </location>
    <ligand>
        <name>[4Fe-4S] cluster</name>
        <dbReference type="ChEBI" id="CHEBI:49883"/>
        <label>1</label>
        <note>4Fe-4S-S-AdoMet</note>
    </ligand>
</feature>
<feature type="binding site" evidence="1">
    <location>
        <position position="39"/>
    </location>
    <ligand>
        <name>S-adenosyl-L-methionine</name>
        <dbReference type="ChEBI" id="CHEBI:59789"/>
    </ligand>
</feature>
<feature type="binding site" evidence="1">
    <location>
        <position position="40"/>
    </location>
    <ligand>
        <name>[4Fe-4S] cluster</name>
        <dbReference type="ChEBI" id="CHEBI:49883"/>
        <label>1</label>
        <note>4Fe-4S-S-AdoMet</note>
    </ligand>
</feature>
<feature type="binding site" evidence="1">
    <location>
        <position position="76"/>
    </location>
    <ligand>
        <name>GTP</name>
        <dbReference type="ChEBI" id="CHEBI:37565"/>
    </ligand>
</feature>
<feature type="binding site" evidence="1">
    <location>
        <position position="80"/>
    </location>
    <ligand>
        <name>S-adenosyl-L-methionine</name>
        <dbReference type="ChEBI" id="CHEBI:59789"/>
    </ligand>
</feature>
<feature type="binding site" evidence="1">
    <location>
        <position position="107"/>
    </location>
    <ligand>
        <name>GTP</name>
        <dbReference type="ChEBI" id="CHEBI:37565"/>
    </ligand>
</feature>
<feature type="binding site" evidence="1">
    <location>
        <position position="131"/>
    </location>
    <ligand>
        <name>S-adenosyl-L-methionine</name>
        <dbReference type="ChEBI" id="CHEBI:59789"/>
    </ligand>
</feature>
<feature type="binding site" evidence="1">
    <location>
        <position position="168"/>
    </location>
    <ligand>
        <name>GTP</name>
        <dbReference type="ChEBI" id="CHEBI:37565"/>
    </ligand>
</feature>
<feature type="binding site" evidence="1">
    <location>
        <position position="202"/>
    </location>
    <ligand>
        <name>S-adenosyl-L-methionine</name>
        <dbReference type="ChEBI" id="CHEBI:59789"/>
    </ligand>
</feature>
<feature type="binding site" evidence="1">
    <location>
        <position position="265"/>
    </location>
    <ligand>
        <name>[4Fe-4S] cluster</name>
        <dbReference type="ChEBI" id="CHEBI:49883"/>
        <label>2</label>
        <note>4Fe-4S-substrate</note>
    </ligand>
</feature>
<feature type="binding site" evidence="1">
    <location>
        <position position="268"/>
    </location>
    <ligand>
        <name>[4Fe-4S] cluster</name>
        <dbReference type="ChEBI" id="CHEBI:49883"/>
        <label>2</label>
        <note>4Fe-4S-substrate</note>
    </ligand>
</feature>
<feature type="binding site" evidence="1">
    <location>
        <begin position="270"/>
        <end position="272"/>
    </location>
    <ligand>
        <name>GTP</name>
        <dbReference type="ChEBI" id="CHEBI:37565"/>
    </ligand>
</feature>
<feature type="binding site" evidence="1">
    <location>
        <position position="282"/>
    </location>
    <ligand>
        <name>[4Fe-4S] cluster</name>
        <dbReference type="ChEBI" id="CHEBI:49883"/>
        <label>2</label>
        <note>4Fe-4S-substrate</note>
    </ligand>
</feature>
<accession>Q4QJR9</accession>
<sequence length="337" mass="38381">MQSIPIKNVGESRLVDPFQRQYYYLRLSITDQCNFRCTYCLPDGYQPEANKPSFLTLKEIIHLAQAFAEMGTEKIRLTGGEPTLRKDFISIAESIANIDGIRQLAVTTNGYRMAKDVADWKQAGITSINVSVDSLDPKMFHQITGINKFDDVMRGIDRAFEVGYNKVKVNSVLMKNLNDKEFEQFLAWVKHRPIQMRFIELMQTGEMDSFFDRYHLSGQILADKLLKNGWTLQHKSHTDGPAKVFTHPDYAGEIGLIMPYEKNFCASCNRLRVSAKGKLHLCLFGEEGIELRDLLQSHEQQAILQARIFAALQGKREHHYLHIGDTGVRNHLASIGG</sequence>
<proteinExistence type="inferred from homology"/>